<keyword id="KW-0963">Cytoplasm</keyword>
<keyword id="KW-0378">Hydrolase</keyword>
<evidence type="ECO:0000255" key="1">
    <source>
        <dbReference type="HAMAP-Rule" id="MF_00739"/>
    </source>
</evidence>
<accession>B2KAA6</accession>
<comment type="catalytic activity">
    <reaction evidence="1">
        <text>urea + 2 H2O + H(+) = hydrogencarbonate + 2 NH4(+)</text>
        <dbReference type="Rhea" id="RHEA:20557"/>
        <dbReference type="ChEBI" id="CHEBI:15377"/>
        <dbReference type="ChEBI" id="CHEBI:15378"/>
        <dbReference type="ChEBI" id="CHEBI:16199"/>
        <dbReference type="ChEBI" id="CHEBI:17544"/>
        <dbReference type="ChEBI" id="CHEBI:28938"/>
        <dbReference type="EC" id="3.5.1.5"/>
    </reaction>
</comment>
<comment type="pathway">
    <text evidence="1">Nitrogen metabolism; urea degradation; CO(2) and NH(3) from urea (urease route): step 1/1.</text>
</comment>
<comment type="subunit">
    <text evidence="1">Heterotrimer of UreA (gamma), UreB (beta) and UreC (alpha) subunits. Three heterotrimers associate to form the active enzyme.</text>
</comment>
<comment type="subcellular location">
    <subcellularLocation>
        <location evidence="1">Cytoplasm</location>
    </subcellularLocation>
</comment>
<comment type="similarity">
    <text evidence="1">Belongs to the urease gamma subunit family.</text>
</comment>
<protein>
    <recommendedName>
        <fullName evidence="1">Urease subunit gamma</fullName>
        <ecNumber evidence="1">3.5.1.5</ecNumber>
    </recommendedName>
    <alternativeName>
        <fullName evidence="1">Urea amidohydrolase subunit gamma</fullName>
    </alternativeName>
</protein>
<gene>
    <name evidence="1" type="primary">ureA</name>
    <name type="ordered locus">YPTS_3060</name>
</gene>
<feature type="chain" id="PRO_1000199890" description="Urease subunit gamma">
    <location>
        <begin position="1"/>
        <end position="100"/>
    </location>
</feature>
<organism>
    <name type="scientific">Yersinia pseudotuberculosis serotype IB (strain PB1/+)</name>
    <dbReference type="NCBI Taxonomy" id="502801"/>
    <lineage>
        <taxon>Bacteria</taxon>
        <taxon>Pseudomonadati</taxon>
        <taxon>Pseudomonadota</taxon>
        <taxon>Gammaproteobacteria</taxon>
        <taxon>Enterobacterales</taxon>
        <taxon>Yersiniaceae</taxon>
        <taxon>Yersinia</taxon>
    </lineage>
</organism>
<proteinExistence type="inferred from homology"/>
<name>URE3_YERPB</name>
<reference key="1">
    <citation type="submission" date="2008-04" db="EMBL/GenBank/DDBJ databases">
        <title>Complete sequence of Yersinia pseudotuberculosis PB1/+.</title>
        <authorList>
            <person name="Copeland A."/>
            <person name="Lucas S."/>
            <person name="Lapidus A."/>
            <person name="Glavina del Rio T."/>
            <person name="Dalin E."/>
            <person name="Tice H."/>
            <person name="Bruce D."/>
            <person name="Goodwin L."/>
            <person name="Pitluck S."/>
            <person name="Munk A.C."/>
            <person name="Brettin T."/>
            <person name="Detter J.C."/>
            <person name="Han C."/>
            <person name="Tapia R."/>
            <person name="Schmutz J."/>
            <person name="Larimer F."/>
            <person name="Land M."/>
            <person name="Hauser L."/>
            <person name="Challacombe J.F."/>
            <person name="Green L."/>
            <person name="Lindler L.E."/>
            <person name="Nikolich M.P."/>
            <person name="Richardson P."/>
        </authorList>
    </citation>
    <scope>NUCLEOTIDE SEQUENCE [LARGE SCALE GENOMIC DNA]</scope>
    <source>
        <strain>PB1/+</strain>
    </source>
</reference>
<sequence>MQLTPREVEKLMIYTLSDVAFKRKARGLKLNYPEAVSIITVTAMEGARDGKSVEDVMKEASKVLTKDDVMDGVADLIPNVQVEAIFTDGSRLVTVHDPIK</sequence>
<dbReference type="EC" id="3.5.1.5" evidence="1"/>
<dbReference type="EMBL" id="CP001048">
    <property type="protein sequence ID" value="ACC90017.1"/>
    <property type="molecule type" value="Genomic_DNA"/>
</dbReference>
<dbReference type="RefSeq" id="WP_002215288.1">
    <property type="nucleotide sequence ID" value="NZ_CP009780.1"/>
</dbReference>
<dbReference type="SMR" id="B2KAA6"/>
<dbReference type="KEGG" id="ypb:YPTS_3060"/>
<dbReference type="PATRIC" id="fig|502801.10.peg.2492"/>
<dbReference type="UniPathway" id="UPA00258">
    <property type="reaction ID" value="UER00370"/>
</dbReference>
<dbReference type="GO" id="GO:0005737">
    <property type="term" value="C:cytoplasm"/>
    <property type="evidence" value="ECO:0007669"/>
    <property type="project" value="UniProtKB-SubCell"/>
</dbReference>
<dbReference type="GO" id="GO:0016151">
    <property type="term" value="F:nickel cation binding"/>
    <property type="evidence" value="ECO:0007669"/>
    <property type="project" value="InterPro"/>
</dbReference>
<dbReference type="GO" id="GO:0009039">
    <property type="term" value="F:urease activity"/>
    <property type="evidence" value="ECO:0007669"/>
    <property type="project" value="UniProtKB-UniRule"/>
</dbReference>
<dbReference type="GO" id="GO:0043419">
    <property type="term" value="P:urea catabolic process"/>
    <property type="evidence" value="ECO:0007669"/>
    <property type="project" value="UniProtKB-UniRule"/>
</dbReference>
<dbReference type="CDD" id="cd00390">
    <property type="entry name" value="Urease_gamma"/>
    <property type="match status" value="1"/>
</dbReference>
<dbReference type="Gene3D" id="3.30.280.10">
    <property type="entry name" value="Urease, gamma-like subunit"/>
    <property type="match status" value="1"/>
</dbReference>
<dbReference type="HAMAP" id="MF_00739">
    <property type="entry name" value="Urease_gamma"/>
    <property type="match status" value="1"/>
</dbReference>
<dbReference type="InterPro" id="IPR012010">
    <property type="entry name" value="Urease_gamma"/>
</dbReference>
<dbReference type="InterPro" id="IPR002026">
    <property type="entry name" value="Urease_gamma/gamma-beta_su"/>
</dbReference>
<dbReference type="InterPro" id="IPR036463">
    <property type="entry name" value="Urease_gamma_sf"/>
</dbReference>
<dbReference type="InterPro" id="IPR050069">
    <property type="entry name" value="Urease_subunit"/>
</dbReference>
<dbReference type="NCBIfam" id="NF009712">
    <property type="entry name" value="PRK13241.1"/>
    <property type="match status" value="1"/>
</dbReference>
<dbReference type="NCBIfam" id="TIGR00193">
    <property type="entry name" value="urease_gam"/>
    <property type="match status" value="1"/>
</dbReference>
<dbReference type="PANTHER" id="PTHR33569">
    <property type="entry name" value="UREASE"/>
    <property type="match status" value="1"/>
</dbReference>
<dbReference type="PANTHER" id="PTHR33569:SF1">
    <property type="entry name" value="UREASE"/>
    <property type="match status" value="1"/>
</dbReference>
<dbReference type="Pfam" id="PF00547">
    <property type="entry name" value="Urease_gamma"/>
    <property type="match status" value="1"/>
</dbReference>
<dbReference type="PIRSF" id="PIRSF001223">
    <property type="entry name" value="Urease_gamma"/>
    <property type="match status" value="1"/>
</dbReference>
<dbReference type="SUPFAM" id="SSF54111">
    <property type="entry name" value="Urease, gamma-subunit"/>
    <property type="match status" value="1"/>
</dbReference>